<keyword id="KW-0067">ATP-binding</keyword>
<keyword id="KW-0150">Chloroplast</keyword>
<keyword id="KW-0547">Nucleotide-binding</keyword>
<keyword id="KW-0934">Plastid</keyword>
<keyword id="KW-0813">Transport</keyword>
<protein>
    <recommendedName>
        <fullName>Probable ATP-dependent transporter ycf16</fullName>
    </recommendedName>
</protein>
<name>ABCX_GUITH</name>
<proteinExistence type="inferred from homology"/>
<accession>O78474</accession>
<gene>
    <name type="primary">ycf16</name>
</gene>
<comment type="subcellular location">
    <subcellularLocation>
        <location>Plastid</location>
        <location>Chloroplast</location>
    </subcellularLocation>
</comment>
<comment type="similarity">
    <text evidence="2">Belongs to the ABC transporter superfamily. Ycf16 family.</text>
</comment>
<reference key="1">
    <citation type="journal article" date="1999" name="J. Phycol.">
        <title>The atpA gene cluster of a cryptomonad, Guillardia theta: a piece in the puzzle of chloroplast genome development.</title>
        <authorList>
            <person name="Leitsch C.E.W."/>
            <person name="Kowallik K.V."/>
            <person name="Douglas S.E."/>
        </authorList>
    </citation>
    <scope>NUCLEOTIDE SEQUENCE [GENOMIC DNA]</scope>
</reference>
<reference key="2">
    <citation type="journal article" date="1999" name="J. Mol. Evol.">
        <title>The plastid genome of the cryptophyte alga, Guillardia theta: complete sequence and conserved synteny groups confirm its common ancestry with red algae.</title>
        <authorList>
            <person name="Douglas S.E."/>
            <person name="Penny S.L."/>
        </authorList>
    </citation>
    <scope>NUCLEOTIDE SEQUENCE [LARGE SCALE GENOMIC DNA]</scope>
</reference>
<evidence type="ECO:0000255" key="1">
    <source>
        <dbReference type="PROSITE-ProRule" id="PRU00434"/>
    </source>
</evidence>
<evidence type="ECO:0000305" key="2"/>
<organism>
    <name type="scientific">Guillardia theta</name>
    <name type="common">Cryptophyte</name>
    <name type="synonym">Cryptomonas phi</name>
    <dbReference type="NCBI Taxonomy" id="55529"/>
    <lineage>
        <taxon>Eukaryota</taxon>
        <taxon>Cryptophyceae</taxon>
        <taxon>Pyrenomonadales</taxon>
        <taxon>Geminigeraceae</taxon>
        <taxon>Guillardia</taxon>
    </lineage>
</organism>
<sequence>MKKKILEVTNLHAAVNEIKIVKGLNLVVNAGEIHAIMGKNGSGKSTFAKIIAGHPDYTITNGDITYQHTSILELTPEDRAKRGIFLSFQYPIEIPGVTNADFLRLACNARRIYQGLPEMEPLEFFEYINSKLPLVDLKPSFLTRDVNEGFSGGEKKRNEILQMSILDTKLAVLDETDSGLDIDALRTVANGIKSLANDGNAIILITHYQRLLDYIKPDFVHVMQEGKIIKTGSASLALDLEKYGYDWLKNELK</sequence>
<geneLocation type="chloroplast"/>
<feature type="chain" id="PRO_0000093410" description="Probable ATP-dependent transporter ycf16">
    <location>
        <begin position="1"/>
        <end position="253"/>
    </location>
</feature>
<feature type="domain" description="ABC transporter" evidence="1">
    <location>
        <begin position="6"/>
        <end position="250"/>
    </location>
</feature>
<feature type="binding site" evidence="1">
    <location>
        <begin position="38"/>
        <end position="45"/>
    </location>
    <ligand>
        <name>ATP</name>
        <dbReference type="ChEBI" id="CHEBI:30616"/>
    </ligand>
</feature>
<dbReference type="EMBL" id="AF041468">
    <property type="protein sequence ID" value="AAC35665.1"/>
    <property type="molecule type" value="Genomic_DNA"/>
</dbReference>
<dbReference type="RefSeq" id="NP_050731.1">
    <property type="nucleotide sequence ID" value="NC_000926.1"/>
</dbReference>
<dbReference type="SMR" id="O78474"/>
<dbReference type="GeneID" id="857036"/>
<dbReference type="HOGENOM" id="CLU_000604_48_1_1"/>
<dbReference type="OMA" id="MAMLEPK"/>
<dbReference type="GO" id="GO:0009507">
    <property type="term" value="C:chloroplast"/>
    <property type="evidence" value="ECO:0007669"/>
    <property type="project" value="UniProtKB-SubCell"/>
</dbReference>
<dbReference type="GO" id="GO:0005524">
    <property type="term" value="F:ATP binding"/>
    <property type="evidence" value="ECO:0007669"/>
    <property type="project" value="UniProtKB-KW"/>
</dbReference>
<dbReference type="GO" id="GO:0016887">
    <property type="term" value="F:ATP hydrolysis activity"/>
    <property type="evidence" value="ECO:0007669"/>
    <property type="project" value="InterPro"/>
</dbReference>
<dbReference type="CDD" id="cd03217">
    <property type="entry name" value="ABC_FeS_Assembly"/>
    <property type="match status" value="1"/>
</dbReference>
<dbReference type="Gene3D" id="3.40.50.300">
    <property type="entry name" value="P-loop containing nucleotide triphosphate hydrolases"/>
    <property type="match status" value="1"/>
</dbReference>
<dbReference type="InterPro" id="IPR003593">
    <property type="entry name" value="AAA+_ATPase"/>
</dbReference>
<dbReference type="InterPro" id="IPR003439">
    <property type="entry name" value="ABC_transporter-like_ATP-bd"/>
</dbReference>
<dbReference type="InterPro" id="IPR017871">
    <property type="entry name" value="ABC_transporter-like_CS"/>
</dbReference>
<dbReference type="InterPro" id="IPR010230">
    <property type="entry name" value="FeS-cluster_ATPase_SufC"/>
</dbReference>
<dbReference type="InterPro" id="IPR027417">
    <property type="entry name" value="P-loop_NTPase"/>
</dbReference>
<dbReference type="NCBIfam" id="TIGR01978">
    <property type="entry name" value="sufC"/>
    <property type="match status" value="1"/>
</dbReference>
<dbReference type="PANTHER" id="PTHR43204">
    <property type="entry name" value="ABC TRANSPORTER I FAMILY MEMBER 6, CHLOROPLASTIC"/>
    <property type="match status" value="1"/>
</dbReference>
<dbReference type="PANTHER" id="PTHR43204:SF1">
    <property type="entry name" value="ABC TRANSPORTER I FAMILY MEMBER 6, CHLOROPLASTIC"/>
    <property type="match status" value="1"/>
</dbReference>
<dbReference type="Pfam" id="PF00005">
    <property type="entry name" value="ABC_tran"/>
    <property type="match status" value="1"/>
</dbReference>
<dbReference type="SMART" id="SM00382">
    <property type="entry name" value="AAA"/>
    <property type="match status" value="1"/>
</dbReference>
<dbReference type="SUPFAM" id="SSF52540">
    <property type="entry name" value="P-loop containing nucleoside triphosphate hydrolases"/>
    <property type="match status" value="1"/>
</dbReference>
<dbReference type="PROSITE" id="PS00211">
    <property type="entry name" value="ABC_TRANSPORTER_1"/>
    <property type="match status" value="1"/>
</dbReference>
<dbReference type="PROSITE" id="PS50893">
    <property type="entry name" value="ABC_TRANSPORTER_2"/>
    <property type="match status" value="1"/>
</dbReference>